<gene>
    <name evidence="1" type="primary">E1</name>
</gene>
<feature type="chain" id="PRO_0000133151" description="Replication protein E1">
    <location>
        <begin position="1"/>
        <end position="644"/>
    </location>
</feature>
<feature type="domain" description="SF3 helicase" evidence="1">
    <location>
        <begin position="444"/>
        <end position="594"/>
    </location>
</feature>
<feature type="region of interest" description="Disordered" evidence="2">
    <location>
        <begin position="146"/>
        <end position="177"/>
    </location>
</feature>
<feature type="region of interest" description="DNA-binding region" evidence="1">
    <location>
        <begin position="179"/>
        <end position="345"/>
    </location>
</feature>
<feature type="short sequence motif" description="Nuclear localization signal" evidence="1">
    <location>
        <begin position="86"/>
        <end position="88"/>
    </location>
</feature>
<feature type="compositionally biased region" description="Low complexity" evidence="2">
    <location>
        <begin position="159"/>
        <end position="173"/>
    </location>
</feature>
<feature type="binding site" evidence="1">
    <location>
        <begin position="470"/>
        <end position="477"/>
    </location>
    <ligand>
        <name>ATP</name>
        <dbReference type="ChEBI" id="CHEBI:30616"/>
    </ligand>
</feature>
<feature type="cross-link" description="Glycyl lysine isopeptide (Lys-Gly) (interchain with G-Cter in SUMO)" evidence="1">
    <location>
        <position position="551"/>
    </location>
</feature>
<protein>
    <recommendedName>
        <fullName evidence="1">Replication protein E1</fullName>
        <ecNumber evidence="1">5.6.2.4</ecNumber>
    </recommendedName>
    <alternativeName>
        <fullName evidence="1">ATP-dependent helicase E1</fullName>
    </alternativeName>
    <alternativeName>
        <fullName evidence="1">DNA 3'-5' helicase E1</fullName>
    </alternativeName>
</protein>
<evidence type="ECO:0000255" key="1">
    <source>
        <dbReference type="HAMAP-Rule" id="MF_04000"/>
    </source>
</evidence>
<evidence type="ECO:0000256" key="2">
    <source>
        <dbReference type="SAM" id="MobiDB-lite"/>
    </source>
</evidence>
<proteinExistence type="inferred from homology"/>
<organismHost>
    <name type="scientific">Homo sapiens</name>
    <name type="common">Human</name>
    <dbReference type="NCBI Taxonomy" id="9606"/>
</organismHost>
<sequence length="644" mass="72243">MDDPEGTNGVGAGCTGWFEVEAVIERRTGDNISDDEDETADDSGTDLIEFIDDSVQSTTQAEAEAARALFNVQEGVDDINAVCALKRKFAACSESAVEDCVDRAANVCVSWKYKNKECTHRKRKIIELEDSGYGNTEVETEQMAHQVESQNGDADLNDSESSGVGASSDVSSETDVDSCNTVPLQNISNILHNSNTKATLLYKFKEAYGVSFMELVRPFKSDKTSCTDWCITGYGISPSVAESLKVLIKQHSIYTHLQCLTCDRGIILLLLIRFKCSKNRLTVAKLMSNLLSIPETCMIIEPPKLRSQACALYWFRTAMSNISDVQGTTPEWIDRLTVLQHSFNDDIFDLSEMIQWAYDNDITDDSDIAYKYAQLADVNSNAAAFLRSNAQAKIVKDCGVMCRHYKRAEKRGMTMGQWIQSRCEKTNDGGNWRPIVQFLRYQNIEFTAFLVAFKQFLQGVPKKSCMLLCGPANTGKSYFGMSLIHFLKGCIISYVNSKSHFWLQPLSDAKLGMIDDVTAISWTYIDDYMRNALDGNDISIDVKHRALVQLKCPPLIITSNTNAGKDSRWPYLHSRLTVFEFNNPFPFDANGNPVYKINDENWKSFFSRTWCKLGLIEEEDKENDGGNISTFKCSAGQNPRHIRS</sequence>
<accession>P26543</accession>
<dbReference type="EC" id="5.6.2.4" evidence="1"/>
<dbReference type="EMBL" id="D90400">
    <property type="protein sequence ID" value="BAA31847.1"/>
    <property type="molecule type" value="Genomic_DNA"/>
</dbReference>
<dbReference type="PIR" id="A36779">
    <property type="entry name" value="W1WL58"/>
</dbReference>
<dbReference type="SMR" id="P26543"/>
<dbReference type="Proteomes" id="UP000007668">
    <property type="component" value="Genome"/>
</dbReference>
<dbReference type="GO" id="GO:0042025">
    <property type="term" value="C:host cell nucleus"/>
    <property type="evidence" value="ECO:0007669"/>
    <property type="project" value="UniProtKB-SubCell"/>
</dbReference>
<dbReference type="GO" id="GO:0005524">
    <property type="term" value="F:ATP binding"/>
    <property type="evidence" value="ECO:0007669"/>
    <property type="project" value="UniProtKB-UniRule"/>
</dbReference>
<dbReference type="GO" id="GO:0016887">
    <property type="term" value="F:ATP hydrolysis activity"/>
    <property type="evidence" value="ECO:0007669"/>
    <property type="project" value="RHEA"/>
</dbReference>
<dbReference type="GO" id="GO:0003677">
    <property type="term" value="F:DNA binding"/>
    <property type="evidence" value="ECO:0007669"/>
    <property type="project" value="UniProtKB-UniRule"/>
</dbReference>
<dbReference type="GO" id="GO:0003678">
    <property type="term" value="F:DNA helicase activity"/>
    <property type="evidence" value="ECO:0007669"/>
    <property type="project" value="UniProtKB-UniRule"/>
</dbReference>
<dbReference type="GO" id="GO:0006260">
    <property type="term" value="P:DNA replication"/>
    <property type="evidence" value="ECO:0007669"/>
    <property type="project" value="UniProtKB-UniRule"/>
</dbReference>
<dbReference type="Gene3D" id="3.40.1310.10">
    <property type="match status" value="1"/>
</dbReference>
<dbReference type="Gene3D" id="3.40.50.300">
    <property type="entry name" value="P-loop containing nucleotide triphosphate hydrolases"/>
    <property type="match status" value="1"/>
</dbReference>
<dbReference type="Gene3D" id="1.10.10.510">
    <property type="entry name" value="Zinc finger, large T-antigen D1 domain"/>
    <property type="match status" value="1"/>
</dbReference>
<dbReference type="HAMAP" id="MF_04000">
    <property type="entry name" value="PPV_E1"/>
    <property type="match status" value="1"/>
</dbReference>
<dbReference type="InterPro" id="IPR014015">
    <property type="entry name" value="Helicase_SF3_DNA-vir"/>
</dbReference>
<dbReference type="InterPro" id="IPR027417">
    <property type="entry name" value="P-loop_NTPase"/>
</dbReference>
<dbReference type="InterPro" id="IPR001177">
    <property type="entry name" value="PPV_DNA_helicase_E1_C"/>
</dbReference>
<dbReference type="InterPro" id="IPR014000">
    <property type="entry name" value="PPV_DNA_helicase_E1_N"/>
</dbReference>
<dbReference type="InterPro" id="IPR046832">
    <property type="entry name" value="PPV_E1_DBD"/>
</dbReference>
<dbReference type="InterPro" id="IPR046935">
    <property type="entry name" value="PPV_E1_DBD_sf"/>
</dbReference>
<dbReference type="InterPro" id="IPR016393">
    <property type="entry name" value="Rep_E1_papillomaV"/>
</dbReference>
<dbReference type="InterPro" id="IPR037102">
    <property type="entry name" value="Znf_lg_T-Ag_D1_dom_sf"/>
</dbReference>
<dbReference type="Pfam" id="PF00519">
    <property type="entry name" value="PPV_E1_C"/>
    <property type="match status" value="1"/>
</dbReference>
<dbReference type="Pfam" id="PF20450">
    <property type="entry name" value="PPV_E1_DBD"/>
    <property type="match status" value="1"/>
</dbReference>
<dbReference type="Pfam" id="PF00524">
    <property type="entry name" value="PPV_E1_N"/>
    <property type="match status" value="1"/>
</dbReference>
<dbReference type="PIRSF" id="PIRSF003383">
    <property type="entry name" value="Rep_E1_papillomaV"/>
    <property type="match status" value="1"/>
</dbReference>
<dbReference type="SUPFAM" id="SSF55464">
    <property type="entry name" value="Origin of replication-binding domain, RBD-like"/>
    <property type="match status" value="1"/>
</dbReference>
<dbReference type="SUPFAM" id="SSF52540">
    <property type="entry name" value="P-loop containing nucleoside triphosphate hydrolases"/>
    <property type="match status" value="1"/>
</dbReference>
<dbReference type="PROSITE" id="PS51206">
    <property type="entry name" value="SF3_HELICASE_1"/>
    <property type="match status" value="1"/>
</dbReference>
<comment type="function">
    <text evidence="1">ATP-dependent DNA 3'-5' helicase required for initiation of viral DNA replication. It forms a complex with the viral E2 protein. The E1-E2 complex binds to the replication origin which contains binding sites for both proteins. During the initial step, a dimer of E1 interacts with a dimer of protein E2 leading to a complex that binds the viral origin of replication with high specificity. Then, a second dimer of E1 displaces the E2 dimer in an ATP-dependent manner to form the E1 tetramer. Following this, two E1 monomers are added to each half of the site, which results in the formation of two E1 trimers on the viral ori. Subsequently, two hexamers will be created. The double hexamer acts as a bi-directional helicase machinery and unwinds the viral DNA and then recruits the host DNA polymerase to start replication.</text>
</comment>
<comment type="catalytic activity">
    <reaction evidence="1">
        <text>Couples ATP hydrolysis with the unwinding of duplex DNA by translocating in the 3'-5' direction.</text>
        <dbReference type="EC" id="5.6.2.4"/>
    </reaction>
</comment>
<comment type="catalytic activity">
    <reaction evidence="1">
        <text>ATP + H2O = ADP + phosphate + H(+)</text>
        <dbReference type="Rhea" id="RHEA:13065"/>
        <dbReference type="ChEBI" id="CHEBI:15377"/>
        <dbReference type="ChEBI" id="CHEBI:15378"/>
        <dbReference type="ChEBI" id="CHEBI:30616"/>
        <dbReference type="ChEBI" id="CHEBI:43474"/>
        <dbReference type="ChEBI" id="CHEBI:456216"/>
        <dbReference type="EC" id="5.6.2.4"/>
    </reaction>
</comment>
<comment type="subunit">
    <text evidence="1">Can form hexamers. Interacts with E2 protein; this interaction increases E1 DNA binding specificity. Interacts with host DNA polymerase subunit POLA2. Interacts with host single stranded DNA-binding protein RPA1. Interacts with host TOP1; this interaction stimulates the enzymatic activity of TOP1.</text>
</comment>
<comment type="subcellular location">
    <subcellularLocation>
        <location evidence="1">Host nucleus</location>
    </subcellularLocation>
</comment>
<comment type="PTM">
    <text evidence="1">Phosphorylated.</text>
</comment>
<comment type="PTM">
    <text evidence="1">Sumoylated.</text>
</comment>
<comment type="similarity">
    <text evidence="1">Belongs to the papillomaviridae E1 protein family.</text>
</comment>
<reference key="1">
    <citation type="journal article" date="1991" name="Virology">
        <title>Human papillomavirus type 58 DNA sequence.</title>
        <authorList>
            <person name="Kirii Y."/>
            <person name="Iwamoto S."/>
            <person name="Matsukura T."/>
        </authorList>
    </citation>
    <scope>NUCLEOTIDE SEQUENCE [GENOMIC DNA]</scope>
</reference>
<name>VE1_HPV58</name>
<keyword id="KW-0067">ATP-binding</keyword>
<keyword id="KW-0235">DNA replication</keyword>
<keyword id="KW-0238">DNA-binding</keyword>
<keyword id="KW-0244">Early protein</keyword>
<keyword id="KW-0347">Helicase</keyword>
<keyword id="KW-1048">Host nucleus</keyword>
<keyword id="KW-0378">Hydrolase</keyword>
<keyword id="KW-0413">Isomerase</keyword>
<keyword id="KW-1017">Isopeptide bond</keyword>
<keyword id="KW-0547">Nucleotide-binding</keyword>
<keyword id="KW-0597">Phosphoprotein</keyword>
<keyword id="KW-0832">Ubl conjugation</keyword>
<organism>
    <name type="scientific">Human papillomavirus 58</name>
    <dbReference type="NCBI Taxonomy" id="10598"/>
    <lineage>
        <taxon>Viruses</taxon>
        <taxon>Monodnaviria</taxon>
        <taxon>Shotokuvirae</taxon>
        <taxon>Cossaviricota</taxon>
        <taxon>Papovaviricetes</taxon>
        <taxon>Zurhausenvirales</taxon>
        <taxon>Papillomaviridae</taxon>
        <taxon>Firstpapillomavirinae</taxon>
        <taxon>Alphapapillomavirus</taxon>
        <taxon>Alphapapillomavirus 9</taxon>
    </lineage>
</organism>